<name>PROB_GLOVI</name>
<accession>Q7NPI6</accession>
<gene>
    <name evidence="1" type="primary">proB</name>
    <name type="ordered locus">gll0069</name>
</gene>
<feature type="chain" id="PRO_0000109676" description="Glutamate 5-kinase">
    <location>
        <begin position="1"/>
        <end position="369"/>
    </location>
</feature>
<feature type="domain" description="PUA" evidence="1">
    <location>
        <begin position="275"/>
        <end position="353"/>
    </location>
</feature>
<feature type="binding site" evidence="1">
    <location>
        <position position="7"/>
    </location>
    <ligand>
        <name>ATP</name>
        <dbReference type="ChEBI" id="CHEBI:30616"/>
    </ligand>
</feature>
<feature type="binding site" evidence="1">
    <location>
        <position position="48"/>
    </location>
    <ligand>
        <name>substrate</name>
    </ligand>
</feature>
<feature type="binding site" evidence="1">
    <location>
        <position position="135"/>
    </location>
    <ligand>
        <name>substrate</name>
    </ligand>
</feature>
<feature type="binding site" evidence="1">
    <location>
        <position position="147"/>
    </location>
    <ligand>
        <name>substrate</name>
    </ligand>
</feature>
<feature type="binding site" evidence="1">
    <location>
        <begin position="167"/>
        <end position="168"/>
    </location>
    <ligand>
        <name>ATP</name>
        <dbReference type="ChEBI" id="CHEBI:30616"/>
    </ligand>
</feature>
<feature type="binding site" evidence="1">
    <location>
        <begin position="208"/>
        <end position="214"/>
    </location>
    <ligand>
        <name>ATP</name>
        <dbReference type="ChEBI" id="CHEBI:30616"/>
    </ligand>
</feature>
<comment type="function">
    <text evidence="1">Catalyzes the transfer of a phosphate group to glutamate to form L-glutamate 5-phosphate.</text>
</comment>
<comment type="catalytic activity">
    <reaction evidence="1">
        <text>L-glutamate + ATP = L-glutamyl 5-phosphate + ADP</text>
        <dbReference type="Rhea" id="RHEA:14877"/>
        <dbReference type="ChEBI" id="CHEBI:29985"/>
        <dbReference type="ChEBI" id="CHEBI:30616"/>
        <dbReference type="ChEBI" id="CHEBI:58274"/>
        <dbReference type="ChEBI" id="CHEBI:456216"/>
        <dbReference type="EC" id="2.7.2.11"/>
    </reaction>
</comment>
<comment type="pathway">
    <text evidence="1">Amino-acid biosynthesis; L-proline biosynthesis; L-glutamate 5-semialdehyde from L-glutamate: step 1/2.</text>
</comment>
<comment type="subcellular location">
    <subcellularLocation>
        <location evidence="1">Cytoplasm</location>
    </subcellularLocation>
</comment>
<comment type="similarity">
    <text evidence="1">Belongs to the glutamate 5-kinase family.</text>
</comment>
<sequence>MVALVVKIGTSSLSDPSTGDLRLATLGGLAETLTRLRRAGHRIILVSSGAVGVGCARLGLKERPATVAGKQAAAAVGQGLLMSMYDRLFGALGQPVAQVLLTRQDLMDRVRYLNARETLSELWRLGTVPIVNENDTVATDELRFGDNDALSALVAGLVEAQWLVLLTDVAGLYSANPRLDPQARLLSEVTEISEELLQSARGRSLWGSGGMASKLEAARIAASAGVATVITEGNTPQNIERILAGEAIGTRFALARPGGRLSLRKRWIGYGLVPAGALHLDEGAVLAVREGGKSLLPAGVRGVEGRFETGALVRLIDGQGLEFARGLVNYSSEELEKIRGRKSHEIAALLGIEGQPPTAVHRDNLVTLS</sequence>
<reference key="1">
    <citation type="journal article" date="2003" name="DNA Res.">
        <title>Complete genome structure of Gloeobacter violaceus PCC 7421, a cyanobacterium that lacks thylakoids.</title>
        <authorList>
            <person name="Nakamura Y."/>
            <person name="Kaneko T."/>
            <person name="Sato S."/>
            <person name="Mimuro M."/>
            <person name="Miyashita H."/>
            <person name="Tsuchiya T."/>
            <person name="Sasamoto S."/>
            <person name="Watanabe A."/>
            <person name="Kawashima K."/>
            <person name="Kishida Y."/>
            <person name="Kiyokawa C."/>
            <person name="Kohara M."/>
            <person name="Matsumoto M."/>
            <person name="Matsuno A."/>
            <person name="Nakazaki N."/>
            <person name="Shimpo S."/>
            <person name="Takeuchi C."/>
            <person name="Yamada M."/>
            <person name="Tabata S."/>
        </authorList>
    </citation>
    <scope>NUCLEOTIDE SEQUENCE [LARGE SCALE GENOMIC DNA]</scope>
    <source>
        <strain>ATCC 29082 / PCC 7421</strain>
    </source>
</reference>
<organism>
    <name type="scientific">Gloeobacter violaceus (strain ATCC 29082 / PCC 7421)</name>
    <dbReference type="NCBI Taxonomy" id="251221"/>
    <lineage>
        <taxon>Bacteria</taxon>
        <taxon>Bacillati</taxon>
        <taxon>Cyanobacteriota</taxon>
        <taxon>Cyanophyceae</taxon>
        <taxon>Gloeobacterales</taxon>
        <taxon>Gloeobacteraceae</taxon>
        <taxon>Gloeobacter</taxon>
    </lineage>
</organism>
<evidence type="ECO:0000255" key="1">
    <source>
        <dbReference type="HAMAP-Rule" id="MF_00456"/>
    </source>
</evidence>
<dbReference type="EC" id="2.7.2.11" evidence="1"/>
<dbReference type="EMBL" id="BA000045">
    <property type="protein sequence ID" value="BAC88010.1"/>
    <property type="molecule type" value="Genomic_DNA"/>
</dbReference>
<dbReference type="RefSeq" id="NP_923015.1">
    <property type="nucleotide sequence ID" value="NC_005125.1"/>
</dbReference>
<dbReference type="RefSeq" id="WP_011140073.1">
    <property type="nucleotide sequence ID" value="NC_005125.1"/>
</dbReference>
<dbReference type="SMR" id="Q7NPI6"/>
<dbReference type="FunCoup" id="Q7NPI6">
    <property type="interactions" value="101"/>
</dbReference>
<dbReference type="STRING" id="251221.gene:10757538"/>
<dbReference type="EnsemblBacteria" id="BAC88010">
    <property type="protein sequence ID" value="BAC88010"/>
    <property type="gene ID" value="BAC88010"/>
</dbReference>
<dbReference type="KEGG" id="gvi:gll0069"/>
<dbReference type="PATRIC" id="fig|251221.4.peg.72"/>
<dbReference type="eggNOG" id="COG0263">
    <property type="taxonomic scope" value="Bacteria"/>
</dbReference>
<dbReference type="HOGENOM" id="CLU_025400_2_0_3"/>
<dbReference type="InParanoid" id="Q7NPI6"/>
<dbReference type="OrthoDB" id="9804434at2"/>
<dbReference type="PhylomeDB" id="Q7NPI6"/>
<dbReference type="UniPathway" id="UPA00098">
    <property type="reaction ID" value="UER00359"/>
</dbReference>
<dbReference type="Proteomes" id="UP000000557">
    <property type="component" value="Chromosome"/>
</dbReference>
<dbReference type="GO" id="GO:0005829">
    <property type="term" value="C:cytosol"/>
    <property type="evidence" value="ECO:0000318"/>
    <property type="project" value="GO_Central"/>
</dbReference>
<dbReference type="GO" id="GO:0005524">
    <property type="term" value="F:ATP binding"/>
    <property type="evidence" value="ECO:0007669"/>
    <property type="project" value="UniProtKB-KW"/>
</dbReference>
<dbReference type="GO" id="GO:0004349">
    <property type="term" value="F:glutamate 5-kinase activity"/>
    <property type="evidence" value="ECO:0000318"/>
    <property type="project" value="GO_Central"/>
</dbReference>
<dbReference type="GO" id="GO:0003723">
    <property type="term" value="F:RNA binding"/>
    <property type="evidence" value="ECO:0007669"/>
    <property type="project" value="InterPro"/>
</dbReference>
<dbReference type="GO" id="GO:0055129">
    <property type="term" value="P:L-proline biosynthetic process"/>
    <property type="evidence" value="ECO:0007669"/>
    <property type="project" value="UniProtKB-UniRule"/>
</dbReference>
<dbReference type="GO" id="GO:0006561">
    <property type="term" value="P:proline biosynthetic process"/>
    <property type="evidence" value="ECO:0000318"/>
    <property type="project" value="GO_Central"/>
</dbReference>
<dbReference type="CDD" id="cd04242">
    <property type="entry name" value="AAK_G5K_ProB"/>
    <property type="match status" value="1"/>
</dbReference>
<dbReference type="CDD" id="cd21157">
    <property type="entry name" value="PUA_G5K"/>
    <property type="match status" value="1"/>
</dbReference>
<dbReference type="FunFam" id="2.30.130.10:FF:000007">
    <property type="entry name" value="Glutamate 5-kinase"/>
    <property type="match status" value="1"/>
</dbReference>
<dbReference type="FunFam" id="3.40.1160.10:FF:000018">
    <property type="entry name" value="Glutamate 5-kinase"/>
    <property type="match status" value="1"/>
</dbReference>
<dbReference type="Gene3D" id="3.40.1160.10">
    <property type="entry name" value="Acetylglutamate kinase-like"/>
    <property type="match status" value="1"/>
</dbReference>
<dbReference type="Gene3D" id="2.30.130.10">
    <property type="entry name" value="PUA domain"/>
    <property type="match status" value="1"/>
</dbReference>
<dbReference type="HAMAP" id="MF_00456">
    <property type="entry name" value="ProB"/>
    <property type="match status" value="1"/>
</dbReference>
<dbReference type="InterPro" id="IPR036393">
    <property type="entry name" value="AceGlu_kinase-like_sf"/>
</dbReference>
<dbReference type="InterPro" id="IPR001048">
    <property type="entry name" value="Asp/Glu/Uridylate_kinase"/>
</dbReference>
<dbReference type="InterPro" id="IPR041739">
    <property type="entry name" value="G5K_ProB"/>
</dbReference>
<dbReference type="InterPro" id="IPR001057">
    <property type="entry name" value="Glu/AcGlu_kinase"/>
</dbReference>
<dbReference type="InterPro" id="IPR011529">
    <property type="entry name" value="Glu_5kinase"/>
</dbReference>
<dbReference type="InterPro" id="IPR005715">
    <property type="entry name" value="Glu_5kinase/COase_Synthase"/>
</dbReference>
<dbReference type="InterPro" id="IPR019797">
    <property type="entry name" value="Glutamate_5-kinase_CS"/>
</dbReference>
<dbReference type="InterPro" id="IPR002478">
    <property type="entry name" value="PUA"/>
</dbReference>
<dbReference type="InterPro" id="IPR015947">
    <property type="entry name" value="PUA-like_sf"/>
</dbReference>
<dbReference type="InterPro" id="IPR036974">
    <property type="entry name" value="PUA_sf"/>
</dbReference>
<dbReference type="NCBIfam" id="TIGR01027">
    <property type="entry name" value="proB"/>
    <property type="match status" value="1"/>
</dbReference>
<dbReference type="PANTHER" id="PTHR43654">
    <property type="entry name" value="GLUTAMATE 5-KINASE"/>
    <property type="match status" value="1"/>
</dbReference>
<dbReference type="PANTHER" id="PTHR43654:SF3">
    <property type="entry name" value="GLUTAMATE 5-KINASE"/>
    <property type="match status" value="1"/>
</dbReference>
<dbReference type="Pfam" id="PF00696">
    <property type="entry name" value="AA_kinase"/>
    <property type="match status" value="1"/>
</dbReference>
<dbReference type="Pfam" id="PF01472">
    <property type="entry name" value="PUA"/>
    <property type="match status" value="1"/>
</dbReference>
<dbReference type="PIRSF" id="PIRSF000729">
    <property type="entry name" value="GK"/>
    <property type="match status" value="1"/>
</dbReference>
<dbReference type="PRINTS" id="PR00474">
    <property type="entry name" value="GLU5KINASE"/>
</dbReference>
<dbReference type="SMART" id="SM00359">
    <property type="entry name" value="PUA"/>
    <property type="match status" value="1"/>
</dbReference>
<dbReference type="SUPFAM" id="SSF53633">
    <property type="entry name" value="Carbamate kinase-like"/>
    <property type="match status" value="1"/>
</dbReference>
<dbReference type="SUPFAM" id="SSF88697">
    <property type="entry name" value="PUA domain-like"/>
    <property type="match status" value="1"/>
</dbReference>
<dbReference type="PROSITE" id="PS00902">
    <property type="entry name" value="GLUTAMATE_5_KINASE"/>
    <property type="match status" value="1"/>
</dbReference>
<dbReference type="PROSITE" id="PS50890">
    <property type="entry name" value="PUA"/>
    <property type="match status" value="1"/>
</dbReference>
<protein>
    <recommendedName>
        <fullName evidence="1">Glutamate 5-kinase</fullName>
        <ecNumber evidence="1">2.7.2.11</ecNumber>
    </recommendedName>
    <alternativeName>
        <fullName evidence="1">Gamma-glutamyl kinase</fullName>
        <shortName evidence="1">GK</shortName>
    </alternativeName>
</protein>
<proteinExistence type="inferred from homology"/>
<keyword id="KW-0028">Amino-acid biosynthesis</keyword>
<keyword id="KW-0067">ATP-binding</keyword>
<keyword id="KW-0963">Cytoplasm</keyword>
<keyword id="KW-0418">Kinase</keyword>
<keyword id="KW-0547">Nucleotide-binding</keyword>
<keyword id="KW-0641">Proline biosynthesis</keyword>
<keyword id="KW-1185">Reference proteome</keyword>
<keyword id="KW-0808">Transferase</keyword>